<proteinExistence type="inferred from homology"/>
<gene>
    <name evidence="1" type="primary">rpsI</name>
    <name type="ordered locus">YPK_0525</name>
</gene>
<keyword id="KW-0687">Ribonucleoprotein</keyword>
<keyword id="KW-0689">Ribosomal protein</keyword>
<organism>
    <name type="scientific">Yersinia pseudotuberculosis serotype O:3 (strain YPIII)</name>
    <dbReference type="NCBI Taxonomy" id="502800"/>
    <lineage>
        <taxon>Bacteria</taxon>
        <taxon>Pseudomonadati</taxon>
        <taxon>Pseudomonadota</taxon>
        <taxon>Gammaproteobacteria</taxon>
        <taxon>Enterobacterales</taxon>
        <taxon>Yersiniaceae</taxon>
        <taxon>Yersinia</taxon>
    </lineage>
</organism>
<feature type="chain" id="PRO_1000128202" description="Small ribosomal subunit protein uS9">
    <location>
        <begin position="1"/>
        <end position="130"/>
    </location>
</feature>
<dbReference type="EMBL" id="CP000950">
    <property type="protein sequence ID" value="ACA66828.1"/>
    <property type="molecule type" value="Genomic_DNA"/>
</dbReference>
<dbReference type="RefSeq" id="WP_002210133.1">
    <property type="nucleotide sequence ID" value="NZ_CP009792.1"/>
</dbReference>
<dbReference type="SMR" id="B1JL67"/>
<dbReference type="GeneID" id="96662997"/>
<dbReference type="KEGG" id="ypy:YPK_0525"/>
<dbReference type="PATRIC" id="fig|502800.11.peg.1134"/>
<dbReference type="GO" id="GO:0022627">
    <property type="term" value="C:cytosolic small ribosomal subunit"/>
    <property type="evidence" value="ECO:0007669"/>
    <property type="project" value="TreeGrafter"/>
</dbReference>
<dbReference type="GO" id="GO:0003723">
    <property type="term" value="F:RNA binding"/>
    <property type="evidence" value="ECO:0007669"/>
    <property type="project" value="TreeGrafter"/>
</dbReference>
<dbReference type="GO" id="GO:0003735">
    <property type="term" value="F:structural constituent of ribosome"/>
    <property type="evidence" value="ECO:0007669"/>
    <property type="project" value="InterPro"/>
</dbReference>
<dbReference type="GO" id="GO:0006412">
    <property type="term" value="P:translation"/>
    <property type="evidence" value="ECO:0007669"/>
    <property type="project" value="UniProtKB-UniRule"/>
</dbReference>
<dbReference type="FunFam" id="3.30.230.10:FF:000001">
    <property type="entry name" value="30S ribosomal protein S9"/>
    <property type="match status" value="1"/>
</dbReference>
<dbReference type="Gene3D" id="3.30.230.10">
    <property type="match status" value="1"/>
</dbReference>
<dbReference type="HAMAP" id="MF_00532_B">
    <property type="entry name" value="Ribosomal_uS9_B"/>
    <property type="match status" value="1"/>
</dbReference>
<dbReference type="InterPro" id="IPR020568">
    <property type="entry name" value="Ribosomal_Su5_D2-typ_SF"/>
</dbReference>
<dbReference type="InterPro" id="IPR000754">
    <property type="entry name" value="Ribosomal_uS9"/>
</dbReference>
<dbReference type="InterPro" id="IPR023035">
    <property type="entry name" value="Ribosomal_uS9_bac/plastid"/>
</dbReference>
<dbReference type="InterPro" id="IPR020574">
    <property type="entry name" value="Ribosomal_uS9_CS"/>
</dbReference>
<dbReference type="InterPro" id="IPR014721">
    <property type="entry name" value="Ribsml_uS5_D2-typ_fold_subgr"/>
</dbReference>
<dbReference type="NCBIfam" id="NF001099">
    <property type="entry name" value="PRK00132.1"/>
    <property type="match status" value="1"/>
</dbReference>
<dbReference type="PANTHER" id="PTHR21569">
    <property type="entry name" value="RIBOSOMAL PROTEIN S9"/>
    <property type="match status" value="1"/>
</dbReference>
<dbReference type="PANTHER" id="PTHR21569:SF1">
    <property type="entry name" value="SMALL RIBOSOMAL SUBUNIT PROTEIN US9M"/>
    <property type="match status" value="1"/>
</dbReference>
<dbReference type="Pfam" id="PF00380">
    <property type="entry name" value="Ribosomal_S9"/>
    <property type="match status" value="1"/>
</dbReference>
<dbReference type="SUPFAM" id="SSF54211">
    <property type="entry name" value="Ribosomal protein S5 domain 2-like"/>
    <property type="match status" value="1"/>
</dbReference>
<dbReference type="PROSITE" id="PS00360">
    <property type="entry name" value="RIBOSOMAL_S9"/>
    <property type="match status" value="1"/>
</dbReference>
<sequence>MAENQYYGTGRRKSSSARVFLKPGSGKIVINQRSLEVYFGRETARMVVNQPLELVDMVTKFDMYITVKGGGISGQAGAIRHGITRALMEYDESLRGELRKAGFVTRDAREVERKKVGLRKARRRPQFSKR</sequence>
<reference key="1">
    <citation type="submission" date="2008-02" db="EMBL/GenBank/DDBJ databases">
        <title>Complete sequence of Yersinia pseudotuberculosis YPIII.</title>
        <authorList>
            <consortium name="US DOE Joint Genome Institute"/>
            <person name="Copeland A."/>
            <person name="Lucas S."/>
            <person name="Lapidus A."/>
            <person name="Glavina del Rio T."/>
            <person name="Dalin E."/>
            <person name="Tice H."/>
            <person name="Bruce D."/>
            <person name="Goodwin L."/>
            <person name="Pitluck S."/>
            <person name="Munk A.C."/>
            <person name="Brettin T."/>
            <person name="Detter J.C."/>
            <person name="Han C."/>
            <person name="Tapia R."/>
            <person name="Schmutz J."/>
            <person name="Larimer F."/>
            <person name="Land M."/>
            <person name="Hauser L."/>
            <person name="Challacombe J.F."/>
            <person name="Green L."/>
            <person name="Lindler L.E."/>
            <person name="Nikolich M.P."/>
            <person name="Richardson P."/>
        </authorList>
    </citation>
    <scope>NUCLEOTIDE SEQUENCE [LARGE SCALE GENOMIC DNA]</scope>
    <source>
        <strain>YPIII</strain>
    </source>
</reference>
<accession>B1JL67</accession>
<protein>
    <recommendedName>
        <fullName evidence="1">Small ribosomal subunit protein uS9</fullName>
    </recommendedName>
    <alternativeName>
        <fullName evidence="2">30S ribosomal protein S9</fullName>
    </alternativeName>
</protein>
<comment type="similarity">
    <text evidence="1">Belongs to the universal ribosomal protein uS9 family.</text>
</comment>
<evidence type="ECO:0000255" key="1">
    <source>
        <dbReference type="HAMAP-Rule" id="MF_00532"/>
    </source>
</evidence>
<evidence type="ECO:0000305" key="2"/>
<name>RS9_YERPY</name>